<name>CAPP_CHRVO</name>
<sequence length="898" mass="98931">MSEHDKDLPLRADLACLDRLLSEVVGEQEGAVVSGAVQAIALRRGDERSHPLPQLAPEAAASLLRACGLYAQLFNIAEDLHHNRRRRAHQLAGSAPQQGSLPRALQRLRQDGVSFHALHQLLSHAKVGAILTAHPTEVQRQSVLDGHRAVRRFLSQLNAADLTPEEREALEAKLKRAILALWQTSEIRHFKMTVRDEITNGVAYHPLAFFEALPALYRRLEREIGQLWGEEARLPSFIRVGSWIGGDRDGNPNVDAGLLRHAVTRQSQQAFEYYLQELKSLYRELSLSSRLVEAGAEVLALAEQSPDQAVSRGEEPYRRALATMQGKLRATARLRGVELACRWDERAPYRDHRELIQDLASLSASLRAHGSALLADGRLSRLIRSVDVFGFFLMPLDLRQHAAVHEGVVAELFSAAGLEEYRALDEAARVRVLIRELATPRLLFSPYLRYGEQAEKELAIFREAAAIQRDFGVEAIGQCIISNCASVSDILALALLCKEAGLIRLEDGQPRASVNLVPLFETIADLENSEAVMRALFALPWYKQLLDSRERVQEVMLGYSDSNKDGGYLTSQWQLWQAETRLVKVFADAGARLQLFHGRGGSVGRGGGPSYEAIVAQPAGSVAGRIRITEQGEVITAKYSDPAIAGRNLEALVAATLEASLGNIPGGEVDTALFDELSASAFAAYRALVETPGFMQYFLEATPVTAIARLNIGSRPASRKSLSSIGDLRAIPWVFSWSQSRLMLPGWFGVGSAVAAYVQKHGDAGLAKLQHLYRHSPFFQVMLSNMEQVLAKADLGIARRFSELVADRELAARLFGAIEAEWRKTHDAFFAITGQAELLEGNPTLRRSLETRLPFLDALGLLQADLLARLRAEPDDEDTLYAIHLTINGTSAGLRNTG</sequence>
<protein>
    <recommendedName>
        <fullName evidence="1">Phosphoenolpyruvate carboxylase</fullName>
        <shortName evidence="1">PEPC</shortName>
        <shortName evidence="1">PEPCase</shortName>
        <ecNumber evidence="1">4.1.1.31</ecNumber>
    </recommendedName>
</protein>
<reference key="1">
    <citation type="journal article" date="2003" name="Proc. Natl. Acad. Sci. U.S.A.">
        <title>The complete genome sequence of Chromobacterium violaceum reveals remarkable and exploitable bacterial adaptability.</title>
        <authorList>
            <person name="Vasconcelos A.T.R."/>
            <person name="de Almeida D.F."/>
            <person name="Hungria M."/>
            <person name="Guimaraes C.T."/>
            <person name="Antonio R.V."/>
            <person name="Almeida F.C."/>
            <person name="de Almeida L.G.P."/>
            <person name="de Almeida R."/>
            <person name="Alves-Gomes J.A."/>
            <person name="Andrade E.M."/>
            <person name="Araripe J."/>
            <person name="de Araujo M.F.F."/>
            <person name="Astolfi-Filho S."/>
            <person name="Azevedo V."/>
            <person name="Baptista A.J."/>
            <person name="Bataus L.A.M."/>
            <person name="Batista J.S."/>
            <person name="Belo A."/>
            <person name="van den Berg C."/>
            <person name="Bogo M."/>
            <person name="Bonatto S."/>
            <person name="Bordignon J."/>
            <person name="Brigido M.M."/>
            <person name="Brito C.A."/>
            <person name="Brocchi M."/>
            <person name="Burity H.A."/>
            <person name="Camargo A.A."/>
            <person name="Cardoso D.D.P."/>
            <person name="Carneiro N.P."/>
            <person name="Carraro D.M."/>
            <person name="Carvalho C.M.B."/>
            <person name="Cascardo J.C.M."/>
            <person name="Cavada B.S."/>
            <person name="Chueire L.M.O."/>
            <person name="Creczynski-Pasa T.B."/>
            <person name="Cunha-Junior N.C."/>
            <person name="Fagundes N."/>
            <person name="Falcao C.L."/>
            <person name="Fantinatti F."/>
            <person name="Farias I.P."/>
            <person name="Felipe M.S.S."/>
            <person name="Ferrari L.P."/>
            <person name="Ferro J.A."/>
            <person name="Ferro M.I.T."/>
            <person name="Franco G.R."/>
            <person name="Freitas N.S.A."/>
            <person name="Furlan L.R."/>
            <person name="Gazzinelli R.T."/>
            <person name="Gomes E.A."/>
            <person name="Goncalves P.R."/>
            <person name="Grangeiro T.B."/>
            <person name="Grattapaglia D."/>
            <person name="Grisard E.C."/>
            <person name="Hanna E.S."/>
            <person name="Jardim S.N."/>
            <person name="Laurino J."/>
            <person name="Leoi L.C.T."/>
            <person name="Lima L.F.A."/>
            <person name="Loureiro M.F."/>
            <person name="Lyra M.C.C.P."/>
            <person name="Madeira H.M.F."/>
            <person name="Manfio G.P."/>
            <person name="Maranhao A.Q."/>
            <person name="Martins W.S."/>
            <person name="di Mauro S.M.Z."/>
            <person name="de Medeiros S.R.B."/>
            <person name="Meissner R.V."/>
            <person name="Moreira M.A.M."/>
            <person name="Nascimento F.F."/>
            <person name="Nicolas M.F."/>
            <person name="Oliveira J.G."/>
            <person name="Oliveira S.C."/>
            <person name="Paixao R.F.C."/>
            <person name="Parente J.A."/>
            <person name="Pedrosa F.O."/>
            <person name="Pena S.D.J."/>
            <person name="Pereira J.O."/>
            <person name="Pereira M."/>
            <person name="Pinto L.S.R.C."/>
            <person name="Pinto L.S."/>
            <person name="Porto J.I.R."/>
            <person name="Potrich D.P."/>
            <person name="Ramalho-Neto C.E."/>
            <person name="Reis A.M.M."/>
            <person name="Rigo L.U."/>
            <person name="Rondinelli E."/>
            <person name="Santos E.B.P."/>
            <person name="Santos F.R."/>
            <person name="Schneider M.P.C."/>
            <person name="Seuanez H.N."/>
            <person name="Silva A.M.R."/>
            <person name="da Silva A.L.C."/>
            <person name="Silva D.W."/>
            <person name="Silva R."/>
            <person name="Simoes I.C."/>
            <person name="Simon D."/>
            <person name="Soares C.M.A."/>
            <person name="Soares R.B.A."/>
            <person name="Souza E.M."/>
            <person name="Souza K.R.L."/>
            <person name="Souza R.C."/>
            <person name="Steffens M.B.R."/>
            <person name="Steindel M."/>
            <person name="Teixeira S.R."/>
            <person name="Urmenyi T."/>
            <person name="Vettore A."/>
            <person name="Wassem R."/>
            <person name="Zaha A."/>
            <person name="Simpson A.J.G."/>
        </authorList>
    </citation>
    <scope>NUCLEOTIDE SEQUENCE [LARGE SCALE GENOMIC DNA]</scope>
    <source>
        <strain>ATCC 12472 / DSM 30191 / JCM 1249 / CCUG 213 / NBRC 12614 / NCIMB 9131 / NCTC 9757 / MK</strain>
    </source>
</reference>
<evidence type="ECO:0000255" key="1">
    <source>
        <dbReference type="HAMAP-Rule" id="MF_00595"/>
    </source>
</evidence>
<accession>Q7P206</accession>
<organism>
    <name type="scientific">Chromobacterium violaceum (strain ATCC 12472 / DSM 30191 / JCM 1249 / CCUG 213 / NBRC 12614 / NCIMB 9131 / NCTC 9757 / MK)</name>
    <dbReference type="NCBI Taxonomy" id="243365"/>
    <lineage>
        <taxon>Bacteria</taxon>
        <taxon>Pseudomonadati</taxon>
        <taxon>Pseudomonadota</taxon>
        <taxon>Betaproteobacteria</taxon>
        <taxon>Neisseriales</taxon>
        <taxon>Chromobacteriaceae</taxon>
        <taxon>Chromobacterium</taxon>
    </lineage>
</organism>
<keyword id="KW-0120">Carbon dioxide fixation</keyword>
<keyword id="KW-0456">Lyase</keyword>
<keyword id="KW-0460">Magnesium</keyword>
<keyword id="KW-1185">Reference proteome</keyword>
<gene>
    <name evidence="1" type="primary">ppc</name>
    <name type="ordered locus">CV_0055</name>
</gene>
<feature type="chain" id="PRO_0000166587" description="Phosphoenolpyruvate carboxylase">
    <location>
        <begin position="1"/>
        <end position="898"/>
    </location>
</feature>
<feature type="active site" evidence="1">
    <location>
        <position position="134"/>
    </location>
</feature>
<feature type="active site" evidence="1">
    <location>
        <position position="564"/>
    </location>
</feature>
<comment type="function">
    <text evidence="1">Forms oxaloacetate, a four-carbon dicarboxylic acid source for the tricarboxylic acid cycle.</text>
</comment>
<comment type="catalytic activity">
    <reaction evidence="1">
        <text>oxaloacetate + phosphate = phosphoenolpyruvate + hydrogencarbonate</text>
        <dbReference type="Rhea" id="RHEA:28370"/>
        <dbReference type="ChEBI" id="CHEBI:16452"/>
        <dbReference type="ChEBI" id="CHEBI:17544"/>
        <dbReference type="ChEBI" id="CHEBI:43474"/>
        <dbReference type="ChEBI" id="CHEBI:58702"/>
        <dbReference type="EC" id="4.1.1.31"/>
    </reaction>
</comment>
<comment type="cofactor">
    <cofactor evidence="1">
        <name>Mg(2+)</name>
        <dbReference type="ChEBI" id="CHEBI:18420"/>
    </cofactor>
</comment>
<comment type="similarity">
    <text evidence="1">Belongs to the PEPCase type 1 family.</text>
</comment>
<proteinExistence type="inferred from homology"/>
<dbReference type="EC" id="4.1.1.31" evidence="1"/>
<dbReference type="EMBL" id="AE016825">
    <property type="protein sequence ID" value="AAQ57735.1"/>
    <property type="molecule type" value="Genomic_DNA"/>
</dbReference>
<dbReference type="RefSeq" id="WP_011133610.1">
    <property type="nucleotide sequence ID" value="NC_005085.1"/>
</dbReference>
<dbReference type="SMR" id="Q7P206"/>
<dbReference type="STRING" id="243365.CV_0055"/>
<dbReference type="KEGG" id="cvi:CV_0055"/>
<dbReference type="eggNOG" id="COG2352">
    <property type="taxonomic scope" value="Bacteria"/>
</dbReference>
<dbReference type="HOGENOM" id="CLU_006557_2_0_4"/>
<dbReference type="OrthoDB" id="9768133at2"/>
<dbReference type="Proteomes" id="UP000001424">
    <property type="component" value="Chromosome"/>
</dbReference>
<dbReference type="GO" id="GO:0005829">
    <property type="term" value="C:cytosol"/>
    <property type="evidence" value="ECO:0007669"/>
    <property type="project" value="TreeGrafter"/>
</dbReference>
<dbReference type="GO" id="GO:0000287">
    <property type="term" value="F:magnesium ion binding"/>
    <property type="evidence" value="ECO:0007669"/>
    <property type="project" value="UniProtKB-UniRule"/>
</dbReference>
<dbReference type="GO" id="GO:0008964">
    <property type="term" value="F:phosphoenolpyruvate carboxylase activity"/>
    <property type="evidence" value="ECO:0007669"/>
    <property type="project" value="UniProtKB-UniRule"/>
</dbReference>
<dbReference type="GO" id="GO:0015977">
    <property type="term" value="P:carbon fixation"/>
    <property type="evidence" value="ECO:0007669"/>
    <property type="project" value="UniProtKB-UniRule"/>
</dbReference>
<dbReference type="GO" id="GO:0006107">
    <property type="term" value="P:oxaloacetate metabolic process"/>
    <property type="evidence" value="ECO:0007669"/>
    <property type="project" value="UniProtKB-UniRule"/>
</dbReference>
<dbReference type="GO" id="GO:0006099">
    <property type="term" value="P:tricarboxylic acid cycle"/>
    <property type="evidence" value="ECO:0007669"/>
    <property type="project" value="InterPro"/>
</dbReference>
<dbReference type="Gene3D" id="1.20.1440.90">
    <property type="entry name" value="Phosphoenolpyruvate/pyruvate domain"/>
    <property type="match status" value="1"/>
</dbReference>
<dbReference type="HAMAP" id="MF_00595">
    <property type="entry name" value="PEPcase_type1"/>
    <property type="match status" value="1"/>
</dbReference>
<dbReference type="InterPro" id="IPR021135">
    <property type="entry name" value="PEP_COase"/>
</dbReference>
<dbReference type="InterPro" id="IPR022805">
    <property type="entry name" value="PEP_COase_bac/pln-type"/>
</dbReference>
<dbReference type="InterPro" id="IPR018129">
    <property type="entry name" value="PEP_COase_Lys_AS"/>
</dbReference>
<dbReference type="InterPro" id="IPR033129">
    <property type="entry name" value="PEPCASE_His_AS"/>
</dbReference>
<dbReference type="InterPro" id="IPR015813">
    <property type="entry name" value="Pyrv/PenolPyrv_kinase-like_dom"/>
</dbReference>
<dbReference type="NCBIfam" id="NF000584">
    <property type="entry name" value="PRK00009.1"/>
    <property type="match status" value="1"/>
</dbReference>
<dbReference type="PANTHER" id="PTHR30523">
    <property type="entry name" value="PHOSPHOENOLPYRUVATE CARBOXYLASE"/>
    <property type="match status" value="1"/>
</dbReference>
<dbReference type="PANTHER" id="PTHR30523:SF6">
    <property type="entry name" value="PHOSPHOENOLPYRUVATE CARBOXYLASE"/>
    <property type="match status" value="1"/>
</dbReference>
<dbReference type="Pfam" id="PF00311">
    <property type="entry name" value="PEPcase"/>
    <property type="match status" value="1"/>
</dbReference>
<dbReference type="PRINTS" id="PR00150">
    <property type="entry name" value="PEPCARBXLASE"/>
</dbReference>
<dbReference type="SUPFAM" id="SSF51621">
    <property type="entry name" value="Phosphoenolpyruvate/pyruvate domain"/>
    <property type="match status" value="1"/>
</dbReference>
<dbReference type="PROSITE" id="PS00781">
    <property type="entry name" value="PEPCASE_1"/>
    <property type="match status" value="1"/>
</dbReference>
<dbReference type="PROSITE" id="PS00393">
    <property type="entry name" value="PEPCASE_2"/>
    <property type="match status" value="1"/>
</dbReference>